<protein>
    <recommendedName>
        <fullName evidence="1">Methionine--tRNA ligase</fullName>
        <ecNumber evidence="1">6.1.1.10</ecNumber>
    </recommendedName>
    <alternativeName>
        <fullName evidence="1">Methionyl-tRNA synthetase</fullName>
        <shortName evidence="1">MetRS</shortName>
    </alternativeName>
</protein>
<comment type="function">
    <text evidence="1">Is required not only for elongation of protein synthesis but also for the initiation of all mRNA translation through initiator tRNA(fMet) aminoacylation.</text>
</comment>
<comment type="catalytic activity">
    <reaction evidence="1">
        <text>tRNA(Met) + L-methionine + ATP = L-methionyl-tRNA(Met) + AMP + diphosphate</text>
        <dbReference type="Rhea" id="RHEA:13481"/>
        <dbReference type="Rhea" id="RHEA-COMP:9667"/>
        <dbReference type="Rhea" id="RHEA-COMP:9698"/>
        <dbReference type="ChEBI" id="CHEBI:30616"/>
        <dbReference type="ChEBI" id="CHEBI:33019"/>
        <dbReference type="ChEBI" id="CHEBI:57844"/>
        <dbReference type="ChEBI" id="CHEBI:78442"/>
        <dbReference type="ChEBI" id="CHEBI:78530"/>
        <dbReference type="ChEBI" id="CHEBI:456215"/>
        <dbReference type="EC" id="6.1.1.10"/>
    </reaction>
</comment>
<comment type="cofactor">
    <cofactor evidence="1">
        <name>Zn(2+)</name>
        <dbReference type="ChEBI" id="CHEBI:29105"/>
    </cofactor>
    <text evidence="1">Binds 1 zinc ion per subunit.</text>
</comment>
<comment type="subunit">
    <text evidence="1">Monomer.</text>
</comment>
<comment type="subcellular location">
    <subcellularLocation>
        <location evidence="1">Cytoplasm</location>
    </subcellularLocation>
</comment>
<comment type="similarity">
    <text evidence="1">Belongs to the class-I aminoacyl-tRNA synthetase family. MetG type 1 subfamily.</text>
</comment>
<name>SYM_STRP7</name>
<organism>
    <name type="scientific">Streptococcus pneumoniae (strain 70585)</name>
    <dbReference type="NCBI Taxonomy" id="488221"/>
    <lineage>
        <taxon>Bacteria</taxon>
        <taxon>Bacillati</taxon>
        <taxon>Bacillota</taxon>
        <taxon>Bacilli</taxon>
        <taxon>Lactobacillales</taxon>
        <taxon>Streptococcaceae</taxon>
        <taxon>Streptococcus</taxon>
    </lineage>
</organism>
<evidence type="ECO:0000255" key="1">
    <source>
        <dbReference type="HAMAP-Rule" id="MF_00098"/>
    </source>
</evidence>
<proteinExistence type="inferred from homology"/>
<sequence>MSIFIGGAWPYANGSLHIGHAAALLPGDILARYYRQKGEEVLYVSGSDCNGTPISIRAKKENKSVKEIADFYHKEFKETFEKLGFTYDLYSRTDSPLHHEIVQELFLQLYEKKFLYTKKIKQLYCTFDNQFLPDRFVEGKCPNCGTHSRGDQCDNCSAILDPIDLVDKRCSICSNEPEVRETEHFYYVFSEFQNLLETYLNDAEETVRWRKNAINLTKRYLREGLPDRAVTRDLPNGIPVPIDGFRDKKIYVWFEAVAGYYTASVDWAQKLQNNITDFWNNRTKSYYVHGKDNIPFHTIIWPAILSGLEIEPLPEYIISSEYLTLENKKISTSNNWAIWLNDIIKKYDADSIRYFLTINAPEMKDANFSWREFIYSHNSELLGSYGNFINRTLKFIEKYFESEIPTKYLEGEILYNLKELYTTVGNLVESGHMKQALEEIFEYIRSANKFYDDMKPWALRESDIEKCKEVLATCVIIILNLGQMLNPFIPFSGKKIEDMFKTKLNTWNYISNLPNKLSDVSMLFDRIDLKKIDEEVLELQQTSSR</sequence>
<feature type="chain" id="PRO_1000118740" description="Methionine--tRNA ligase">
    <location>
        <begin position="1"/>
        <end position="545"/>
    </location>
</feature>
<feature type="short sequence motif" description="'HIGH' region">
    <location>
        <begin position="10"/>
        <end position="20"/>
    </location>
</feature>
<feature type="short sequence motif" description="'KMSKS' region">
    <location>
        <begin position="329"/>
        <end position="333"/>
    </location>
</feature>
<feature type="binding site" evidence="1">
    <location>
        <position position="141"/>
    </location>
    <ligand>
        <name>Zn(2+)</name>
        <dbReference type="ChEBI" id="CHEBI:29105"/>
    </ligand>
</feature>
<feature type="binding site" evidence="1">
    <location>
        <position position="144"/>
    </location>
    <ligand>
        <name>Zn(2+)</name>
        <dbReference type="ChEBI" id="CHEBI:29105"/>
    </ligand>
</feature>
<feature type="binding site" evidence="1">
    <location>
        <position position="153"/>
    </location>
    <ligand>
        <name>Zn(2+)</name>
        <dbReference type="ChEBI" id="CHEBI:29105"/>
    </ligand>
</feature>
<feature type="binding site" evidence="1">
    <location>
        <position position="156"/>
    </location>
    <ligand>
        <name>Zn(2+)</name>
        <dbReference type="ChEBI" id="CHEBI:29105"/>
    </ligand>
</feature>
<feature type="binding site" evidence="1">
    <location>
        <position position="332"/>
    </location>
    <ligand>
        <name>ATP</name>
        <dbReference type="ChEBI" id="CHEBI:30616"/>
    </ligand>
</feature>
<accession>C1C727</accession>
<gene>
    <name evidence="1" type="primary">metG</name>
    <name type="ordered locus">SP70585_1093</name>
</gene>
<dbReference type="EC" id="6.1.1.10" evidence="1"/>
<dbReference type="EMBL" id="CP000918">
    <property type="protein sequence ID" value="ACO17449.1"/>
    <property type="molecule type" value="Genomic_DNA"/>
</dbReference>
<dbReference type="RefSeq" id="WP_000021543.1">
    <property type="nucleotide sequence ID" value="NC_012468.1"/>
</dbReference>
<dbReference type="SMR" id="C1C727"/>
<dbReference type="KEGG" id="snm:SP70585_1093"/>
<dbReference type="HOGENOM" id="CLU_009710_1_2_9"/>
<dbReference type="Proteomes" id="UP000002211">
    <property type="component" value="Chromosome"/>
</dbReference>
<dbReference type="GO" id="GO:0005829">
    <property type="term" value="C:cytosol"/>
    <property type="evidence" value="ECO:0007669"/>
    <property type="project" value="TreeGrafter"/>
</dbReference>
<dbReference type="GO" id="GO:0005524">
    <property type="term" value="F:ATP binding"/>
    <property type="evidence" value="ECO:0007669"/>
    <property type="project" value="UniProtKB-UniRule"/>
</dbReference>
<dbReference type="GO" id="GO:0046872">
    <property type="term" value="F:metal ion binding"/>
    <property type="evidence" value="ECO:0007669"/>
    <property type="project" value="UniProtKB-KW"/>
</dbReference>
<dbReference type="GO" id="GO:0004825">
    <property type="term" value="F:methionine-tRNA ligase activity"/>
    <property type="evidence" value="ECO:0007669"/>
    <property type="project" value="UniProtKB-UniRule"/>
</dbReference>
<dbReference type="GO" id="GO:0006431">
    <property type="term" value="P:methionyl-tRNA aminoacylation"/>
    <property type="evidence" value="ECO:0007669"/>
    <property type="project" value="UniProtKB-UniRule"/>
</dbReference>
<dbReference type="CDD" id="cd07957">
    <property type="entry name" value="Anticodon_Ia_Met"/>
    <property type="match status" value="1"/>
</dbReference>
<dbReference type="CDD" id="cd00814">
    <property type="entry name" value="MetRS_core"/>
    <property type="match status" value="1"/>
</dbReference>
<dbReference type="Gene3D" id="3.40.50.620">
    <property type="entry name" value="HUPs"/>
    <property type="match status" value="1"/>
</dbReference>
<dbReference type="Gene3D" id="1.10.730.10">
    <property type="entry name" value="Isoleucyl-tRNA Synthetase, Domain 1"/>
    <property type="match status" value="1"/>
</dbReference>
<dbReference type="Gene3D" id="2.20.28.20">
    <property type="entry name" value="Methionyl-tRNA synthetase, Zn-domain"/>
    <property type="match status" value="1"/>
</dbReference>
<dbReference type="HAMAP" id="MF_00098">
    <property type="entry name" value="Met_tRNA_synth_type1"/>
    <property type="match status" value="1"/>
</dbReference>
<dbReference type="InterPro" id="IPR001412">
    <property type="entry name" value="aa-tRNA-synth_I_CS"/>
</dbReference>
<dbReference type="InterPro" id="IPR041872">
    <property type="entry name" value="Anticodon_Met"/>
</dbReference>
<dbReference type="InterPro" id="IPR023458">
    <property type="entry name" value="Met-tRNA_ligase_1"/>
</dbReference>
<dbReference type="InterPro" id="IPR014758">
    <property type="entry name" value="Met-tRNA_synth"/>
</dbReference>
<dbReference type="InterPro" id="IPR015413">
    <property type="entry name" value="Methionyl/Leucyl_tRNA_Synth"/>
</dbReference>
<dbReference type="InterPro" id="IPR033911">
    <property type="entry name" value="MetRS_core"/>
</dbReference>
<dbReference type="InterPro" id="IPR029038">
    <property type="entry name" value="MetRS_Zn"/>
</dbReference>
<dbReference type="InterPro" id="IPR014729">
    <property type="entry name" value="Rossmann-like_a/b/a_fold"/>
</dbReference>
<dbReference type="InterPro" id="IPR009080">
    <property type="entry name" value="tRNAsynth_Ia_anticodon-bd"/>
</dbReference>
<dbReference type="NCBIfam" id="TIGR00398">
    <property type="entry name" value="metG"/>
    <property type="match status" value="1"/>
</dbReference>
<dbReference type="PANTHER" id="PTHR45765">
    <property type="entry name" value="METHIONINE--TRNA LIGASE"/>
    <property type="match status" value="1"/>
</dbReference>
<dbReference type="PANTHER" id="PTHR45765:SF1">
    <property type="entry name" value="METHIONINE--TRNA LIGASE, CYTOPLASMIC"/>
    <property type="match status" value="1"/>
</dbReference>
<dbReference type="Pfam" id="PF09334">
    <property type="entry name" value="tRNA-synt_1g"/>
    <property type="match status" value="1"/>
</dbReference>
<dbReference type="PRINTS" id="PR01041">
    <property type="entry name" value="TRNASYNTHMET"/>
</dbReference>
<dbReference type="SUPFAM" id="SSF47323">
    <property type="entry name" value="Anticodon-binding domain of a subclass of class I aminoacyl-tRNA synthetases"/>
    <property type="match status" value="1"/>
</dbReference>
<dbReference type="SUPFAM" id="SSF57770">
    <property type="entry name" value="Methionyl-tRNA synthetase (MetRS), Zn-domain"/>
    <property type="match status" value="1"/>
</dbReference>
<dbReference type="SUPFAM" id="SSF52374">
    <property type="entry name" value="Nucleotidylyl transferase"/>
    <property type="match status" value="1"/>
</dbReference>
<dbReference type="PROSITE" id="PS00178">
    <property type="entry name" value="AA_TRNA_LIGASE_I"/>
    <property type="match status" value="1"/>
</dbReference>
<reference key="1">
    <citation type="journal article" date="2010" name="Genome Biol.">
        <title>Structure and dynamics of the pan-genome of Streptococcus pneumoniae and closely related species.</title>
        <authorList>
            <person name="Donati C."/>
            <person name="Hiller N.L."/>
            <person name="Tettelin H."/>
            <person name="Muzzi A."/>
            <person name="Croucher N.J."/>
            <person name="Angiuoli S.V."/>
            <person name="Oggioni M."/>
            <person name="Dunning Hotopp J.C."/>
            <person name="Hu F.Z."/>
            <person name="Riley D.R."/>
            <person name="Covacci A."/>
            <person name="Mitchell T.J."/>
            <person name="Bentley S.D."/>
            <person name="Kilian M."/>
            <person name="Ehrlich G.D."/>
            <person name="Rappuoli R."/>
            <person name="Moxon E.R."/>
            <person name="Masignani V."/>
        </authorList>
    </citation>
    <scope>NUCLEOTIDE SEQUENCE [LARGE SCALE GENOMIC DNA]</scope>
    <source>
        <strain>70585</strain>
    </source>
</reference>
<keyword id="KW-0030">Aminoacyl-tRNA synthetase</keyword>
<keyword id="KW-0067">ATP-binding</keyword>
<keyword id="KW-0963">Cytoplasm</keyword>
<keyword id="KW-0436">Ligase</keyword>
<keyword id="KW-0479">Metal-binding</keyword>
<keyword id="KW-0547">Nucleotide-binding</keyword>
<keyword id="KW-0648">Protein biosynthesis</keyword>
<keyword id="KW-0862">Zinc</keyword>